<reference key="1">
    <citation type="journal article" date="1979" name="Proc. Natl. Acad. Sci. U.S.A.">
        <title>Structural evidence for independent joining region gene in immunoglobulin heavy chains from anti-galactan myeloma proteins and its potential role in generating diversity in complementarity-determining regions.</title>
        <authorList>
            <person name="Rao D.N."/>
            <person name="Rudikoff S."/>
            <person name="Krutzsch H."/>
            <person name="Potter M."/>
        </authorList>
    </citation>
    <scope>PROTEIN SEQUENCE</scope>
</reference>
<reference key="2">
    <citation type="journal article" date="1992" name="Immunogenetics">
        <title>Allelic polymorphism of mouse Igh-J locus, which encodes immunoglobulin heavy chain joining (JH) segments.</title>
        <authorList>
            <person name="Solin M.L."/>
            <person name="Kaartinen M."/>
        </authorList>
    </citation>
    <scope>NUCLEOTIDE SEQUENCE [GENOMIC DNA] OF 103-117</scope>
</reference>
<feature type="chain" id="PRO_0000059892" description="Ig heavy chain V region X24">
    <location>
        <begin position="1"/>
        <end position="118" status="greater than"/>
    </location>
</feature>
<feature type="domain" description="Ig-like">
    <location>
        <begin position="1"/>
        <end position="111"/>
    </location>
</feature>
<feature type="non-terminal residue">
    <location>
        <position position="118"/>
    </location>
</feature>
<keyword id="KW-1064">Adaptive immunity</keyword>
<keyword id="KW-0903">Direct protein sequencing</keyword>
<keyword id="KW-0391">Immunity</keyword>
<keyword id="KW-1280">Immunoglobulin</keyword>
<keyword id="KW-1185">Reference proteome</keyword>
<organism>
    <name type="scientific">Mus musculus</name>
    <name type="common">Mouse</name>
    <dbReference type="NCBI Taxonomy" id="10090"/>
    <lineage>
        <taxon>Eukaryota</taxon>
        <taxon>Metazoa</taxon>
        <taxon>Chordata</taxon>
        <taxon>Craniata</taxon>
        <taxon>Vertebrata</taxon>
        <taxon>Euteleostomi</taxon>
        <taxon>Mammalia</taxon>
        <taxon>Eutheria</taxon>
        <taxon>Euarchontoglires</taxon>
        <taxon>Glires</taxon>
        <taxon>Rodentia</taxon>
        <taxon>Myomorpha</taxon>
        <taxon>Muroidea</taxon>
        <taxon>Muridae</taxon>
        <taxon>Murinae</taxon>
        <taxon>Mus</taxon>
        <taxon>Mus</taxon>
    </lineage>
</organism>
<proteinExistence type="evidence at protein level"/>
<dbReference type="EMBL" id="X63164">
    <property type="status" value="NOT_ANNOTATED_CDS"/>
    <property type="molecule type" value="Genomic_DNA"/>
</dbReference>
<dbReference type="PIR" id="PT0394">
    <property type="entry name" value="AVMSX2"/>
</dbReference>
<dbReference type="SMR" id="P01809"/>
<dbReference type="FunCoup" id="P01809">
    <property type="interactions" value="408"/>
</dbReference>
<dbReference type="jPOST" id="P01809"/>
<dbReference type="InParanoid" id="P01809"/>
<dbReference type="Proteomes" id="UP000000589">
    <property type="component" value="Unplaced"/>
</dbReference>
<dbReference type="RNAct" id="P01809">
    <property type="molecule type" value="protein"/>
</dbReference>
<dbReference type="GO" id="GO:0005576">
    <property type="term" value="C:extracellular region"/>
    <property type="evidence" value="ECO:0007669"/>
    <property type="project" value="UniProtKB-ARBA"/>
</dbReference>
<dbReference type="GO" id="GO:0019814">
    <property type="term" value="C:immunoglobulin complex"/>
    <property type="evidence" value="ECO:0007669"/>
    <property type="project" value="UniProtKB-KW"/>
</dbReference>
<dbReference type="GO" id="GO:0003823">
    <property type="term" value="F:antigen binding"/>
    <property type="evidence" value="ECO:0000318"/>
    <property type="project" value="GO_Central"/>
</dbReference>
<dbReference type="GO" id="GO:0016064">
    <property type="term" value="P:immunoglobulin mediated immune response"/>
    <property type="evidence" value="ECO:0000318"/>
    <property type="project" value="GO_Central"/>
</dbReference>
<dbReference type="CDD" id="cd04981">
    <property type="entry name" value="IgV_H"/>
    <property type="match status" value="1"/>
</dbReference>
<dbReference type="FunFam" id="2.60.40.10:FF:001259">
    <property type="entry name" value="Immunoglobulin heavy variable 13-2"/>
    <property type="match status" value="1"/>
</dbReference>
<dbReference type="Gene3D" id="2.60.40.10">
    <property type="entry name" value="Immunoglobulins"/>
    <property type="match status" value="1"/>
</dbReference>
<dbReference type="InterPro" id="IPR007110">
    <property type="entry name" value="Ig-like_dom"/>
</dbReference>
<dbReference type="InterPro" id="IPR036179">
    <property type="entry name" value="Ig-like_dom_sf"/>
</dbReference>
<dbReference type="InterPro" id="IPR013783">
    <property type="entry name" value="Ig-like_fold"/>
</dbReference>
<dbReference type="InterPro" id="IPR003599">
    <property type="entry name" value="Ig_sub"/>
</dbReference>
<dbReference type="InterPro" id="IPR013106">
    <property type="entry name" value="Ig_V-set"/>
</dbReference>
<dbReference type="InterPro" id="IPR050199">
    <property type="entry name" value="IgHV"/>
</dbReference>
<dbReference type="PANTHER" id="PTHR23266">
    <property type="entry name" value="IMMUNOGLOBULIN HEAVY CHAIN"/>
    <property type="match status" value="1"/>
</dbReference>
<dbReference type="Pfam" id="PF07686">
    <property type="entry name" value="V-set"/>
    <property type="match status" value="1"/>
</dbReference>
<dbReference type="SMART" id="SM00409">
    <property type="entry name" value="IG"/>
    <property type="match status" value="1"/>
</dbReference>
<dbReference type="SMART" id="SM00406">
    <property type="entry name" value="IGv"/>
    <property type="match status" value="1"/>
</dbReference>
<dbReference type="SUPFAM" id="SSF48726">
    <property type="entry name" value="Immunoglobulin"/>
    <property type="match status" value="1"/>
</dbReference>
<dbReference type="PROSITE" id="PS50835">
    <property type="entry name" value="IG_LIKE"/>
    <property type="match status" value="1"/>
</dbReference>
<name>HVM39_MOUSE</name>
<accession>P01809</accession>
<protein>
    <recommendedName>
        <fullName>Ig heavy chain V region X24</fullName>
    </recommendedName>
</protein>
<sequence length="118" mass="13105">EVKLLESGGGLVQPGGSLLSCAASGFDFSRYWMSWARQAPGKGQEWIGEINPGSSTINYTPSLKDKFIISRDNAKNTLYLQMSKVRSEDTALYYCARLGYYGYFDYWGQGTTLTVSSE</sequence>
<comment type="miscellaneous">
    <text>This chain was isolated from an IgA myeloma protein that binds galactan.</text>
</comment>